<evidence type="ECO:0000255" key="1"/>
<evidence type="ECO:0000269" key="2">
    <source>
    </source>
</evidence>
<evidence type="ECO:0000269" key="3">
    <source>
    </source>
</evidence>
<evidence type="ECO:0000269" key="4">
    <source>
    </source>
</evidence>
<evidence type="ECO:0000269" key="5">
    <source>
    </source>
</evidence>
<evidence type="ECO:0000269" key="6">
    <source>
    </source>
</evidence>
<evidence type="ECO:0000303" key="7">
    <source ref="4"/>
</evidence>
<evidence type="ECO:0000305" key="8"/>
<evidence type="ECO:0007829" key="9">
    <source>
        <dbReference type="PDB" id="6WMM"/>
    </source>
</evidence>
<evidence type="ECO:0007829" key="10">
    <source>
        <dbReference type="PDB" id="6WMO"/>
    </source>
</evidence>
<evidence type="ECO:0007829" key="11">
    <source>
        <dbReference type="PDB" id="7JHO"/>
    </source>
</evidence>
<evidence type="ECO:0007829" key="12">
    <source>
        <dbReference type="PDB" id="8TJC"/>
    </source>
</evidence>
<accession>Q9NY97</accession>
<accession>Q54AC1</accession>
<accession>Q9NQQ9</accession>
<accession>Q9NQR0</accession>
<accession>Q9NUT9</accession>
<feature type="chain" id="PRO_0000219170" description="N-acetyllactosaminide beta-1,3-N-acetylglucosaminyltransferase 2">
    <location>
        <begin position="1"/>
        <end position="397"/>
    </location>
</feature>
<feature type="topological domain" description="Cytoplasmic" evidence="1">
    <location>
        <begin position="1"/>
        <end position="7"/>
    </location>
</feature>
<feature type="transmembrane region" description="Helical; Signal-anchor for type II membrane protein" evidence="1">
    <location>
        <begin position="8"/>
        <end position="28"/>
    </location>
</feature>
<feature type="topological domain" description="Lumenal" evidence="1">
    <location>
        <begin position="29"/>
        <end position="397"/>
    </location>
</feature>
<feature type="glycosylation site" description="N-linked (GlcNAc...) asparagine" evidence="3">
    <location>
        <position position="79"/>
    </location>
</feature>
<feature type="glycosylation site" description="N-linked (GlcNAc...) asparagine" evidence="1">
    <location>
        <position position="89"/>
    </location>
</feature>
<feature type="glycosylation site" description="N-linked (GlcNAc...) asparagine" evidence="1">
    <location>
        <position position="127"/>
    </location>
</feature>
<feature type="glycosylation site" description="N-linked (GlcNAc...) asparagine" evidence="1">
    <location>
        <position position="173"/>
    </location>
</feature>
<feature type="glycosylation site" description="N-linked (GlcNAc...) asparagine" evidence="1">
    <location>
        <position position="219"/>
    </location>
</feature>
<feature type="splice variant" id="VSP_001791" description="In isoform 2." evidence="7">
    <original>MSVGRRRIKLL</original>
    <variation>MVSRSLV</variation>
    <location>
        <begin position="1"/>
        <end position="11"/>
    </location>
</feature>
<feature type="mutagenesis site" description="Loss of enzymatic activity, no loss of B3GNT8-binding." evidence="4">
    <original>D</original>
    <variation>A</variation>
    <location>
        <position position="245"/>
    </location>
</feature>
<feature type="sequence conflict" description="In Ref. 3; CAB91546." evidence="8" ref="3">
    <original>L</original>
    <variation>LL</variation>
    <location>
        <position position="11"/>
    </location>
</feature>
<feature type="turn" evidence="12">
    <location>
        <begin position="49"/>
        <end position="52"/>
    </location>
</feature>
<feature type="helix" evidence="9">
    <location>
        <begin position="58"/>
        <end position="70"/>
    </location>
</feature>
<feature type="helix" evidence="11">
    <location>
        <begin position="72"/>
        <end position="74"/>
    </location>
</feature>
<feature type="strand" evidence="9">
    <location>
        <begin position="92"/>
        <end position="94"/>
    </location>
</feature>
<feature type="helix" evidence="9">
    <location>
        <begin position="102"/>
        <end position="105"/>
    </location>
</feature>
<feature type="helix" evidence="9">
    <location>
        <begin position="109"/>
        <end position="111"/>
    </location>
</feature>
<feature type="helix" evidence="9">
    <location>
        <begin position="114"/>
        <end position="121"/>
    </location>
</feature>
<feature type="turn" evidence="9">
    <location>
        <begin position="122"/>
        <end position="124"/>
    </location>
</feature>
<feature type="strand" evidence="9">
    <location>
        <begin position="130"/>
        <end position="132"/>
    </location>
</feature>
<feature type="turn" evidence="9">
    <location>
        <begin position="135"/>
        <end position="138"/>
    </location>
</feature>
<feature type="strand" evidence="9">
    <location>
        <begin position="143"/>
        <end position="149"/>
    </location>
</feature>
<feature type="helix" evidence="9">
    <location>
        <begin position="155"/>
        <end position="163"/>
    </location>
</feature>
<feature type="turn" evidence="9">
    <location>
        <begin position="164"/>
        <end position="166"/>
    </location>
</feature>
<feature type="helix" evidence="9">
    <location>
        <begin position="171"/>
        <end position="173"/>
    </location>
</feature>
<feature type="strand" evidence="9">
    <location>
        <begin position="176"/>
        <end position="184"/>
    </location>
</feature>
<feature type="helix" evidence="9">
    <location>
        <begin position="187"/>
        <end position="189"/>
    </location>
</feature>
<feature type="helix" evidence="9">
    <location>
        <begin position="195"/>
        <end position="205"/>
    </location>
</feature>
<feature type="strand" evidence="9">
    <location>
        <begin position="208"/>
        <end position="214"/>
    </location>
</feature>
<feature type="helix" evidence="9">
    <location>
        <begin position="217"/>
        <end position="219"/>
    </location>
</feature>
<feature type="helix" evidence="9">
    <location>
        <begin position="220"/>
        <end position="234"/>
    </location>
</feature>
<feature type="strand" evidence="9">
    <location>
        <begin position="239"/>
        <end position="245"/>
    </location>
</feature>
<feature type="strand" evidence="9">
    <location>
        <begin position="248"/>
        <end position="250"/>
    </location>
</feature>
<feature type="helix" evidence="9">
    <location>
        <begin position="252"/>
        <end position="260"/>
    </location>
</feature>
<feature type="helix" evidence="9">
    <location>
        <begin position="264"/>
        <end position="268"/>
    </location>
</feature>
<feature type="strand" evidence="9">
    <location>
        <begin position="271"/>
        <end position="278"/>
    </location>
</feature>
<feature type="turn" evidence="9">
    <location>
        <begin position="293"/>
        <end position="295"/>
    </location>
</feature>
<feature type="strand" evidence="9">
    <location>
        <begin position="303"/>
        <end position="312"/>
    </location>
</feature>
<feature type="helix" evidence="9">
    <location>
        <begin position="313"/>
        <end position="323"/>
    </location>
</feature>
<feature type="helix" evidence="9">
    <location>
        <begin position="332"/>
        <end position="342"/>
    </location>
</feature>
<feature type="strand" evidence="12">
    <location>
        <begin position="353"/>
        <end position="356"/>
    </location>
</feature>
<feature type="helix" evidence="9">
    <location>
        <begin position="360"/>
        <end position="362"/>
    </location>
</feature>
<feature type="helix" evidence="9">
    <location>
        <begin position="367"/>
        <end position="370"/>
    </location>
</feature>
<feature type="strand" evidence="9">
    <location>
        <begin position="373"/>
        <end position="376"/>
    </location>
</feature>
<feature type="helix" evidence="9">
    <location>
        <begin position="380"/>
        <end position="390"/>
    </location>
</feature>
<feature type="helix" evidence="10">
    <location>
        <begin position="392"/>
        <end position="395"/>
    </location>
</feature>
<organism>
    <name type="scientific">Homo sapiens</name>
    <name type="common">Human</name>
    <dbReference type="NCBI Taxonomy" id="9606"/>
    <lineage>
        <taxon>Eukaryota</taxon>
        <taxon>Metazoa</taxon>
        <taxon>Chordata</taxon>
        <taxon>Craniata</taxon>
        <taxon>Vertebrata</taxon>
        <taxon>Euteleostomi</taxon>
        <taxon>Mammalia</taxon>
        <taxon>Eutheria</taxon>
        <taxon>Euarchontoglires</taxon>
        <taxon>Primates</taxon>
        <taxon>Haplorrhini</taxon>
        <taxon>Catarrhini</taxon>
        <taxon>Hominidae</taxon>
        <taxon>Homo</taxon>
    </lineage>
</organism>
<gene>
    <name type="primary">B3GNT2</name>
    <name type="synonym">B3GALT7</name>
    <name type="synonym">B3GNT1</name>
</gene>
<protein>
    <recommendedName>
        <fullName>N-acetyllactosaminide beta-1,3-N-acetylglucosaminyltransferase 2</fullName>
        <ecNumber evidence="2 5 6">2.4.1.149</ecNumber>
    </recommendedName>
    <alternativeName>
        <fullName>Beta-1,3-N-acetylglucosaminyltransferase 1</fullName>
        <shortName>BGnT-1</shortName>
        <shortName>Beta-1,3-Gn-T1</shortName>
        <shortName>Beta3Gn-T1</shortName>
    </alternativeName>
    <alternativeName>
        <fullName>Beta-1,3-galactosyltransferase 7</fullName>
        <shortName>Beta-1,3-GalTase 7</shortName>
        <shortName>Beta3Gal-T7</shortName>
        <shortName>Beta3GalT7</shortName>
        <shortName>b3Gal-T7</shortName>
    </alternativeName>
    <alternativeName>
        <fullName>Beta-3-Gx-T7</fullName>
    </alternativeName>
    <alternativeName>
        <fullName>UDP-Gal:beta-GlcNAc beta-1,3-galactosyltransferase 7</fullName>
    </alternativeName>
    <alternativeName>
        <fullName>UDP-GlcNAc:betaGal beta-1,3-N-acetylglucosaminyltransferase 2</fullName>
        <shortName>BGnT-2</shortName>
        <shortName>Beta-1,3-Gn-T2</shortName>
        <shortName>Beta-1,3-N-acetylglucosaminyltransferase 2</shortName>
        <shortName>Beta3Gn-T2</shortName>
    </alternativeName>
    <alternativeName>
        <fullName>UDP-galactose:beta-N-acetylglucosamine beta-1,3-galactosyltransferase 7</fullName>
    </alternativeName>
</protein>
<reference key="1">
    <citation type="journal article" date="1999" name="Proc. Natl. Acad. Sci. U.S.A.">
        <title>A beta-1,3-N-acetylglucosaminyltransferase with poly-N-acetyllactosamine synthase activity is structurally related to beta-1,3-galactosyltransferases.</title>
        <authorList>
            <person name="Zhou D."/>
            <person name="Dinter A."/>
            <person name="Gutierrez Gallego R."/>
            <person name="Kamerling J.P."/>
            <person name="Vliegenthart J.F.G."/>
            <person name="Berger E.G."/>
            <person name="Hennet T."/>
        </authorList>
    </citation>
    <scope>NUCLEOTIDE SEQUENCE [MRNA] (ISOFORM 1)</scope>
    <scope>FUNCTION</scope>
    <scope>COFACTOR</scope>
    <scope>CATALYTIC ACTIVITY</scope>
    <source>
        <tissue>Brain</tissue>
    </source>
</reference>
<reference key="2">
    <citation type="submission" date="2000-08" db="EMBL/GenBank/DDBJ databases">
        <authorList>
            <person name="Zhou D."/>
            <person name="Berger E.G."/>
            <person name="Hennet T."/>
        </authorList>
    </citation>
    <scope>SEQUENCE REVISION</scope>
</reference>
<reference key="3">
    <citation type="submission" date="1998-05" db="EMBL/GenBank/DDBJ databases">
        <title>Cloning and expression of two beta-1,3-galactosyltransferases: beta3gal-T5 and beta3gal-T6.</title>
        <authorList>
            <person name="Amado M."/>
            <person name="Carneiro F."/>
            <person name="Clausen H."/>
        </authorList>
    </citation>
    <scope>NUCLEOTIDE SEQUENCE [MRNA] (ISOFORM 1)</scope>
</reference>
<reference key="4">
    <citation type="submission" date="2000-07" db="EMBL/GenBank/DDBJ databases">
        <title>A novel member of beta-1,3-galactosyltransferase family is down regulated during bladder TCC progression.</title>
        <authorList>
            <person name="Gromova I."/>
            <person name="Gromov P."/>
            <person name="Celis J.E."/>
        </authorList>
    </citation>
    <scope>NUCLEOTIDE SEQUENCE [MRNA] (ISOFORMS 1 AND 2)</scope>
    <source>
        <tissue>Urinary bladder</tissue>
    </source>
</reference>
<reference key="5">
    <citation type="journal article" date="2001" name="J. Biol. Chem.">
        <title>Identification and characterization of three novel beta 1,3-N-acetylglucosaminyltransferases structurally related to the beta 1,3-galactosyltransferase family.</title>
        <authorList>
            <person name="Shiraishi N."/>
            <person name="Natsume A."/>
            <person name="Togayachi A."/>
            <person name="Endo T."/>
            <person name="Akashima T."/>
            <person name="Yamada Y."/>
            <person name="Imai N."/>
            <person name="Nakagawa S."/>
            <person name="Koizumi S."/>
            <person name="Sekine S."/>
            <person name="Narimatsu H."/>
            <person name="Sasaki K."/>
        </authorList>
    </citation>
    <scope>NUCLEOTIDE SEQUENCE [MRNA] (ISOFORM 1)</scope>
    <scope>CATALYTIC ACTIVITY</scope>
    <scope>TISSUE SPECIFICITY</scope>
    <scope>FUNCTION</scope>
</reference>
<reference key="6">
    <citation type="journal article" date="2005" name="Nature">
        <title>Generation and annotation of the DNA sequences of human chromosomes 2 and 4.</title>
        <authorList>
            <person name="Hillier L.W."/>
            <person name="Graves T.A."/>
            <person name="Fulton R.S."/>
            <person name="Fulton L.A."/>
            <person name="Pepin K.H."/>
            <person name="Minx P."/>
            <person name="Wagner-McPherson C."/>
            <person name="Layman D."/>
            <person name="Wylie K."/>
            <person name="Sekhon M."/>
            <person name="Becker M.C."/>
            <person name="Fewell G.A."/>
            <person name="Delehaunty K.D."/>
            <person name="Miner T.L."/>
            <person name="Nash W.E."/>
            <person name="Kremitzki C."/>
            <person name="Oddy L."/>
            <person name="Du H."/>
            <person name="Sun H."/>
            <person name="Bradshaw-Cordum H."/>
            <person name="Ali J."/>
            <person name="Carter J."/>
            <person name="Cordes M."/>
            <person name="Harris A."/>
            <person name="Isak A."/>
            <person name="van Brunt A."/>
            <person name="Nguyen C."/>
            <person name="Du F."/>
            <person name="Courtney L."/>
            <person name="Kalicki J."/>
            <person name="Ozersky P."/>
            <person name="Abbott S."/>
            <person name="Armstrong J."/>
            <person name="Belter E.A."/>
            <person name="Caruso L."/>
            <person name="Cedroni M."/>
            <person name="Cotton M."/>
            <person name="Davidson T."/>
            <person name="Desai A."/>
            <person name="Elliott G."/>
            <person name="Erb T."/>
            <person name="Fronick C."/>
            <person name="Gaige T."/>
            <person name="Haakenson W."/>
            <person name="Haglund K."/>
            <person name="Holmes A."/>
            <person name="Harkins R."/>
            <person name="Kim K."/>
            <person name="Kruchowski S.S."/>
            <person name="Strong C.M."/>
            <person name="Grewal N."/>
            <person name="Goyea E."/>
            <person name="Hou S."/>
            <person name="Levy A."/>
            <person name="Martinka S."/>
            <person name="Mead K."/>
            <person name="McLellan M.D."/>
            <person name="Meyer R."/>
            <person name="Randall-Maher J."/>
            <person name="Tomlinson C."/>
            <person name="Dauphin-Kohlberg S."/>
            <person name="Kozlowicz-Reilly A."/>
            <person name="Shah N."/>
            <person name="Swearengen-Shahid S."/>
            <person name="Snider J."/>
            <person name="Strong J.T."/>
            <person name="Thompson J."/>
            <person name="Yoakum M."/>
            <person name="Leonard S."/>
            <person name="Pearman C."/>
            <person name="Trani L."/>
            <person name="Radionenko M."/>
            <person name="Waligorski J.E."/>
            <person name="Wang C."/>
            <person name="Rock S.M."/>
            <person name="Tin-Wollam A.-M."/>
            <person name="Maupin R."/>
            <person name="Latreille P."/>
            <person name="Wendl M.C."/>
            <person name="Yang S.-P."/>
            <person name="Pohl C."/>
            <person name="Wallis J.W."/>
            <person name="Spieth J."/>
            <person name="Bieri T.A."/>
            <person name="Berkowicz N."/>
            <person name="Nelson J.O."/>
            <person name="Osborne J."/>
            <person name="Ding L."/>
            <person name="Meyer R."/>
            <person name="Sabo A."/>
            <person name="Shotland Y."/>
            <person name="Sinha P."/>
            <person name="Wohldmann P.E."/>
            <person name="Cook L.L."/>
            <person name="Hickenbotham M.T."/>
            <person name="Eldred J."/>
            <person name="Williams D."/>
            <person name="Jones T.A."/>
            <person name="She X."/>
            <person name="Ciccarelli F.D."/>
            <person name="Izaurralde E."/>
            <person name="Taylor J."/>
            <person name="Schmutz J."/>
            <person name="Myers R.M."/>
            <person name="Cox D.R."/>
            <person name="Huang X."/>
            <person name="McPherson J.D."/>
            <person name="Mardis E.R."/>
            <person name="Clifton S.W."/>
            <person name="Warren W.C."/>
            <person name="Chinwalla A.T."/>
            <person name="Eddy S.R."/>
            <person name="Marra M.A."/>
            <person name="Ovcharenko I."/>
            <person name="Furey T.S."/>
            <person name="Miller W."/>
            <person name="Eichler E.E."/>
            <person name="Bork P."/>
            <person name="Suyama M."/>
            <person name="Torrents D."/>
            <person name="Waterston R.H."/>
            <person name="Wilson R.K."/>
        </authorList>
    </citation>
    <scope>NUCLEOTIDE SEQUENCE [LARGE SCALE GENOMIC DNA]</scope>
</reference>
<reference key="7">
    <citation type="submission" date="2005-09" db="EMBL/GenBank/DDBJ databases">
        <authorList>
            <person name="Mural R.J."/>
            <person name="Istrail S."/>
            <person name="Sutton G."/>
            <person name="Florea L."/>
            <person name="Halpern A.L."/>
            <person name="Mobarry C.M."/>
            <person name="Lippert R."/>
            <person name="Walenz B."/>
            <person name="Shatkay H."/>
            <person name="Dew I."/>
            <person name="Miller J.R."/>
            <person name="Flanigan M.J."/>
            <person name="Edwards N.J."/>
            <person name="Bolanos R."/>
            <person name="Fasulo D."/>
            <person name="Halldorsson B.V."/>
            <person name="Hannenhalli S."/>
            <person name="Turner R."/>
            <person name="Yooseph S."/>
            <person name="Lu F."/>
            <person name="Nusskern D.R."/>
            <person name="Shue B.C."/>
            <person name="Zheng X.H."/>
            <person name="Zhong F."/>
            <person name="Delcher A.L."/>
            <person name="Huson D.H."/>
            <person name="Kravitz S.A."/>
            <person name="Mouchard L."/>
            <person name="Reinert K."/>
            <person name="Remington K.A."/>
            <person name="Clark A.G."/>
            <person name="Waterman M.S."/>
            <person name="Eichler E.E."/>
            <person name="Adams M.D."/>
            <person name="Hunkapiller M.W."/>
            <person name="Myers E.W."/>
            <person name="Venter J.C."/>
        </authorList>
    </citation>
    <scope>NUCLEOTIDE SEQUENCE [LARGE SCALE GENOMIC DNA]</scope>
</reference>
<reference key="8">
    <citation type="journal article" date="2004" name="Genome Res.">
        <title>The status, quality, and expansion of the NIH full-length cDNA project: the Mammalian Gene Collection (MGC).</title>
        <authorList>
            <consortium name="The MGC Project Team"/>
        </authorList>
    </citation>
    <scope>NUCLEOTIDE SEQUENCE [LARGE SCALE MRNA] (ISOFORM 1)</scope>
    <source>
        <tissue>Brain</tissue>
        <tissue>Testis</tissue>
    </source>
</reference>
<reference key="9">
    <citation type="journal article" date="2004" name="Nat. Genet.">
        <title>Complete sequencing and characterization of 21,243 full-length human cDNAs.</title>
        <authorList>
            <person name="Ota T."/>
            <person name="Suzuki Y."/>
            <person name="Nishikawa T."/>
            <person name="Otsuki T."/>
            <person name="Sugiyama T."/>
            <person name="Irie R."/>
            <person name="Wakamatsu A."/>
            <person name="Hayashi K."/>
            <person name="Sato H."/>
            <person name="Nagai K."/>
            <person name="Kimura K."/>
            <person name="Makita H."/>
            <person name="Sekine M."/>
            <person name="Obayashi M."/>
            <person name="Nishi T."/>
            <person name="Shibahara T."/>
            <person name="Tanaka T."/>
            <person name="Ishii S."/>
            <person name="Yamamoto J."/>
            <person name="Saito K."/>
            <person name="Kawai Y."/>
            <person name="Isono Y."/>
            <person name="Nakamura Y."/>
            <person name="Nagahari K."/>
            <person name="Murakami K."/>
            <person name="Yasuda T."/>
            <person name="Iwayanagi T."/>
            <person name="Wagatsuma M."/>
            <person name="Shiratori A."/>
            <person name="Sudo H."/>
            <person name="Hosoiri T."/>
            <person name="Kaku Y."/>
            <person name="Kodaira H."/>
            <person name="Kondo H."/>
            <person name="Sugawara M."/>
            <person name="Takahashi M."/>
            <person name="Kanda K."/>
            <person name="Yokoi T."/>
            <person name="Furuya T."/>
            <person name="Kikkawa E."/>
            <person name="Omura Y."/>
            <person name="Abe K."/>
            <person name="Kamihara K."/>
            <person name="Katsuta N."/>
            <person name="Sato K."/>
            <person name="Tanikawa M."/>
            <person name="Yamazaki M."/>
            <person name="Ninomiya K."/>
            <person name="Ishibashi T."/>
            <person name="Yamashita H."/>
            <person name="Murakawa K."/>
            <person name="Fujimori K."/>
            <person name="Tanai H."/>
            <person name="Kimata M."/>
            <person name="Watanabe M."/>
            <person name="Hiraoka S."/>
            <person name="Chiba Y."/>
            <person name="Ishida S."/>
            <person name="Ono Y."/>
            <person name="Takiguchi S."/>
            <person name="Watanabe S."/>
            <person name="Yosida M."/>
            <person name="Hotuta T."/>
            <person name="Kusano J."/>
            <person name="Kanehori K."/>
            <person name="Takahashi-Fujii A."/>
            <person name="Hara H."/>
            <person name="Tanase T.-O."/>
            <person name="Nomura Y."/>
            <person name="Togiya S."/>
            <person name="Komai F."/>
            <person name="Hara R."/>
            <person name="Takeuchi K."/>
            <person name="Arita M."/>
            <person name="Imose N."/>
            <person name="Musashino K."/>
            <person name="Yuuki H."/>
            <person name="Oshima A."/>
            <person name="Sasaki N."/>
            <person name="Aotsuka S."/>
            <person name="Yoshikawa Y."/>
            <person name="Matsunawa H."/>
            <person name="Ichihara T."/>
            <person name="Shiohata N."/>
            <person name="Sano S."/>
            <person name="Moriya S."/>
            <person name="Momiyama H."/>
            <person name="Satoh N."/>
            <person name="Takami S."/>
            <person name="Terashima Y."/>
            <person name="Suzuki O."/>
            <person name="Nakagawa S."/>
            <person name="Senoh A."/>
            <person name="Mizoguchi H."/>
            <person name="Goto Y."/>
            <person name="Shimizu F."/>
            <person name="Wakebe H."/>
            <person name="Hishigaki H."/>
            <person name="Watanabe T."/>
            <person name="Sugiyama A."/>
            <person name="Takemoto M."/>
            <person name="Kawakami B."/>
            <person name="Yamazaki M."/>
            <person name="Watanabe K."/>
            <person name="Kumagai A."/>
            <person name="Itakura S."/>
            <person name="Fukuzumi Y."/>
            <person name="Fujimori Y."/>
            <person name="Komiyama M."/>
            <person name="Tashiro H."/>
            <person name="Tanigami A."/>
            <person name="Fujiwara T."/>
            <person name="Ono T."/>
            <person name="Yamada K."/>
            <person name="Fujii Y."/>
            <person name="Ozaki K."/>
            <person name="Hirao M."/>
            <person name="Ohmori Y."/>
            <person name="Kawabata A."/>
            <person name="Hikiji T."/>
            <person name="Kobatake N."/>
            <person name="Inagaki H."/>
            <person name="Ikema Y."/>
            <person name="Okamoto S."/>
            <person name="Okitani R."/>
            <person name="Kawakami T."/>
            <person name="Noguchi S."/>
            <person name="Itoh T."/>
            <person name="Shigeta K."/>
            <person name="Senba T."/>
            <person name="Matsumura K."/>
            <person name="Nakajima Y."/>
            <person name="Mizuno T."/>
            <person name="Morinaga M."/>
            <person name="Sasaki M."/>
            <person name="Togashi T."/>
            <person name="Oyama M."/>
            <person name="Hata H."/>
            <person name="Watanabe M."/>
            <person name="Komatsu T."/>
            <person name="Mizushima-Sugano J."/>
            <person name="Satoh T."/>
            <person name="Shirai Y."/>
            <person name="Takahashi Y."/>
            <person name="Nakagawa K."/>
            <person name="Okumura K."/>
            <person name="Nagase T."/>
            <person name="Nomura N."/>
            <person name="Kikuchi H."/>
            <person name="Masuho Y."/>
            <person name="Yamashita R."/>
            <person name="Nakai K."/>
            <person name="Yada T."/>
            <person name="Nakamura Y."/>
            <person name="Ohara O."/>
            <person name="Isogai T."/>
            <person name="Sugano S."/>
        </authorList>
    </citation>
    <scope>NUCLEOTIDE SEQUENCE [LARGE SCALE MRNA] OF 25-397</scope>
    <source>
        <tissue>Placenta</tissue>
    </source>
</reference>
<reference key="10">
    <citation type="journal article" date="1999" name="Biochim. Biophys. Acta">
        <title>Identification and characterization of large galactosyltransferase gene families: galactosyltransferases for all functions.</title>
        <authorList>
            <person name="Amado M."/>
            <person name="Almeida R."/>
            <person name="Schwientek T."/>
            <person name="Clausen H."/>
        </authorList>
    </citation>
    <scope>REVIEW</scope>
</reference>
<reference key="11">
    <citation type="journal article" date="2004" name="Genome Biol.">
        <title>An unappreciated role for RNA surveillance.</title>
        <authorList>
            <person name="Hillman R.T."/>
            <person name="Green R.E."/>
            <person name="Brenner S.E."/>
        </authorList>
    </citation>
    <scope>SPLICE ISOFORM(S) THAT ARE POTENTIAL NMD TARGET(S)</scope>
</reference>
<reference key="12">
    <citation type="journal article" date="2005" name="J. Proteome Res.">
        <title>Human plasma N-glycoproteome analysis by immunoaffinity subtraction, hydrazide chemistry, and mass spectrometry.</title>
        <authorList>
            <person name="Liu T."/>
            <person name="Qian W.-J."/>
            <person name="Gritsenko M.A."/>
            <person name="Camp D.G. II"/>
            <person name="Monroe M.E."/>
            <person name="Moore R.J."/>
            <person name="Smith R.D."/>
        </authorList>
    </citation>
    <scope>GLYCOSYLATION [LARGE SCALE ANALYSIS] AT ASN-79</scope>
    <source>
        <tissue>Plasma</tissue>
    </source>
</reference>
<reference key="13">
    <citation type="journal article" date="2008" name="J. Biol. Chem.">
        <title>Activation of beta1,3-N-acetylglucosaminyltransferase-2 (beta3Gn-T2) by beta3Gn-T8. Possible involvement of beta3Gn-T8 in increasing poly-N-acetyllactosamine chains in differentiated HL-60 cells.</title>
        <authorList>
            <person name="Seko A."/>
            <person name="Yamashita K."/>
        </authorList>
    </citation>
    <scope>INTERACTION WITH B3GNT8</scope>
    <scope>MUTAGENESIS OF ASP-245</scope>
</reference>
<reference key="14">
    <citation type="journal article" date="2014" name="Elife">
        <title>B4GAT1 is the priming enzyme for the LARGE-dependent functional glycosylation of alpha-dystroglycan.</title>
        <authorList>
            <person name="Praissman J.L."/>
            <person name="Live D.H."/>
            <person name="Wang S."/>
            <person name="Ramiah A."/>
            <person name="Chinoy Z.S."/>
            <person name="Boons G.J."/>
            <person name="Moremen K.W."/>
            <person name="Wells L."/>
        </authorList>
    </citation>
    <scope>FUNCTION</scope>
    <scope>CATALYTIC ACTIVITY</scope>
    <scope>PATHWAY</scope>
</reference>
<dbReference type="EC" id="2.4.1.149" evidence="2 5 6"/>
<dbReference type="EMBL" id="AF092051">
    <property type="protein sequence ID" value="AAD09764.2"/>
    <property type="molecule type" value="mRNA"/>
</dbReference>
<dbReference type="EMBL" id="AJ006077">
    <property type="protein sequence ID" value="CAB91546.1"/>
    <property type="molecule type" value="mRNA"/>
</dbReference>
<dbReference type="EMBL" id="AF288208">
    <property type="protein sequence ID" value="AAF97253.1"/>
    <property type="molecule type" value="mRNA"/>
</dbReference>
<dbReference type="EMBL" id="AF288209">
    <property type="protein sequence ID" value="AAF97254.1"/>
    <property type="molecule type" value="mRNA"/>
</dbReference>
<dbReference type="EMBL" id="AB049584">
    <property type="protein sequence ID" value="BAB21530.1"/>
    <property type="molecule type" value="mRNA"/>
</dbReference>
<dbReference type="EMBL" id="BC030579">
    <property type="protein sequence ID" value="AAH30579.1"/>
    <property type="molecule type" value="mRNA"/>
</dbReference>
<dbReference type="EMBL" id="AC093401">
    <property type="protein sequence ID" value="AAX93271.1"/>
    <property type="molecule type" value="Genomic_DNA"/>
</dbReference>
<dbReference type="EMBL" id="CH471053">
    <property type="protein sequence ID" value="EAW99977.1"/>
    <property type="molecule type" value="Genomic_DNA"/>
</dbReference>
<dbReference type="EMBL" id="CH471053">
    <property type="protein sequence ID" value="EAW99978.1"/>
    <property type="molecule type" value="Genomic_DNA"/>
</dbReference>
<dbReference type="EMBL" id="CH471053">
    <property type="protein sequence ID" value="EAW99979.1"/>
    <property type="molecule type" value="Genomic_DNA"/>
</dbReference>
<dbReference type="EMBL" id="BC047933">
    <property type="protein sequence ID" value="AAH47933.1"/>
    <property type="molecule type" value="mRNA"/>
</dbReference>
<dbReference type="EMBL" id="AK002009">
    <property type="protein sequence ID" value="BAA92031.1"/>
    <property type="status" value="ALT_INIT"/>
    <property type="molecule type" value="mRNA"/>
</dbReference>
<dbReference type="CCDS" id="CCDS1870.1">
    <molecule id="Q9NY97-1"/>
</dbReference>
<dbReference type="RefSeq" id="NP_001306004.1">
    <molecule id="Q9NY97-1"/>
    <property type="nucleotide sequence ID" value="NM_001319075.2"/>
</dbReference>
<dbReference type="RefSeq" id="NP_006568.2">
    <molecule id="Q9NY97-1"/>
    <property type="nucleotide sequence ID" value="NM_006577.5"/>
</dbReference>
<dbReference type="PDB" id="6WMM">
    <property type="method" value="X-ray"/>
    <property type="resolution" value="1.55 A"/>
    <property type="chains" value="A/B=35-397"/>
</dbReference>
<dbReference type="PDB" id="6WMN">
    <property type="method" value="X-ray"/>
    <property type="resolution" value="2.04 A"/>
    <property type="chains" value="A/B/C/D=35-397"/>
</dbReference>
<dbReference type="PDB" id="6WMO">
    <property type="method" value="X-ray"/>
    <property type="resolution" value="1.85 A"/>
    <property type="chains" value="A/B=35-397"/>
</dbReference>
<dbReference type="PDB" id="7JHK">
    <property type="method" value="X-ray"/>
    <property type="resolution" value="2.34 A"/>
    <property type="chains" value="A/B/C/D=45-397"/>
</dbReference>
<dbReference type="PDB" id="7JHL">
    <property type="method" value="X-ray"/>
    <property type="resolution" value="2.26 A"/>
    <property type="chains" value="A/B=45-397"/>
</dbReference>
<dbReference type="PDB" id="7JHM">
    <property type="method" value="X-ray"/>
    <property type="resolution" value="2.19 A"/>
    <property type="chains" value="A/B=45-397"/>
</dbReference>
<dbReference type="PDB" id="7JHN">
    <property type="method" value="X-ray"/>
    <property type="resolution" value="2.20 A"/>
    <property type="chains" value="A=45-397"/>
</dbReference>
<dbReference type="PDB" id="7JHO">
    <property type="method" value="X-ray"/>
    <property type="resolution" value="1.85 A"/>
    <property type="chains" value="A/B=45-397"/>
</dbReference>
<dbReference type="PDB" id="8SZ3">
    <property type="method" value="X-ray"/>
    <property type="resolution" value="2.32 A"/>
    <property type="chains" value="A/B=1-397"/>
</dbReference>
<dbReference type="PDB" id="8TIC">
    <property type="method" value="X-ray"/>
    <property type="resolution" value="2.70 A"/>
    <property type="chains" value="A/B/C/D=1-397"/>
</dbReference>
<dbReference type="PDB" id="8TJC">
    <property type="method" value="X-ray"/>
    <property type="resolution" value="2.20 A"/>
    <property type="chains" value="A/B/C/D=1-397"/>
</dbReference>
<dbReference type="PDBsum" id="6WMM"/>
<dbReference type="PDBsum" id="6WMN"/>
<dbReference type="PDBsum" id="6WMO"/>
<dbReference type="PDBsum" id="7JHK"/>
<dbReference type="PDBsum" id="7JHL"/>
<dbReference type="PDBsum" id="7JHM"/>
<dbReference type="PDBsum" id="7JHN"/>
<dbReference type="PDBsum" id="7JHO"/>
<dbReference type="PDBsum" id="8SZ3"/>
<dbReference type="PDBsum" id="8TIC"/>
<dbReference type="PDBsum" id="8TJC"/>
<dbReference type="SMR" id="Q9NY97"/>
<dbReference type="BioGRID" id="115919">
    <property type="interactions" value="600"/>
</dbReference>
<dbReference type="FunCoup" id="Q9NY97">
    <property type="interactions" value="658"/>
</dbReference>
<dbReference type="IntAct" id="Q9NY97">
    <property type="interactions" value="105"/>
</dbReference>
<dbReference type="STRING" id="9606.ENSP00000305595"/>
<dbReference type="BindingDB" id="Q9NY97"/>
<dbReference type="ChEMBL" id="CHEMBL5465363"/>
<dbReference type="CAZy" id="GT31">
    <property type="family name" value="Glycosyltransferase Family 31"/>
</dbReference>
<dbReference type="GlyConnect" id="1533">
    <property type="glycosylation" value="9 N-Linked glycans (6 sites)"/>
</dbReference>
<dbReference type="GlyCosmos" id="Q9NY97">
    <property type="glycosylation" value="7 sites, 9 glycans"/>
</dbReference>
<dbReference type="GlyGen" id="Q9NY97">
    <property type="glycosylation" value="10 sites, 19 N-linked glycans (7 sites), 1 O-linked glycan (1 site)"/>
</dbReference>
<dbReference type="iPTMnet" id="Q9NY97"/>
<dbReference type="PhosphoSitePlus" id="Q9NY97"/>
<dbReference type="BioMuta" id="B3GNT2"/>
<dbReference type="CPTAC" id="CPTAC-2208"/>
<dbReference type="jPOST" id="Q9NY97"/>
<dbReference type="MassIVE" id="Q9NY97"/>
<dbReference type="PaxDb" id="9606-ENSP00000305595"/>
<dbReference type="PeptideAtlas" id="Q9NY97"/>
<dbReference type="ProteomicsDB" id="83198">
    <molecule id="Q9NY97-1"/>
</dbReference>
<dbReference type="ProteomicsDB" id="83199">
    <molecule id="Q9NY97-2"/>
</dbReference>
<dbReference type="Pumba" id="Q9NY97"/>
<dbReference type="Antibodypedia" id="1107">
    <property type="antibodies" value="191 antibodies from 26 providers"/>
</dbReference>
<dbReference type="DNASU" id="10678"/>
<dbReference type="Ensembl" id="ENST00000301998.5">
    <molecule id="Q9NY97-1"/>
    <property type="protein sequence ID" value="ENSP00000305595.4"/>
    <property type="gene ID" value="ENSG00000170340.11"/>
</dbReference>
<dbReference type="Ensembl" id="ENST00000405767.1">
    <molecule id="Q9NY97-1"/>
    <property type="protein sequence ID" value="ENSP00000384692.1"/>
    <property type="gene ID" value="ENSG00000170340.11"/>
</dbReference>
<dbReference type="GeneID" id="10678"/>
<dbReference type="KEGG" id="hsa:10678"/>
<dbReference type="MANE-Select" id="ENST00000301998.5">
    <property type="protein sequence ID" value="ENSP00000305595.4"/>
    <property type="RefSeq nucleotide sequence ID" value="NM_006577.6"/>
    <property type="RefSeq protein sequence ID" value="NP_006568.2"/>
</dbReference>
<dbReference type="UCSC" id="uc002sbs.4">
    <molecule id="Q9NY97-1"/>
    <property type="organism name" value="human"/>
</dbReference>
<dbReference type="AGR" id="HGNC:15629"/>
<dbReference type="CTD" id="10678"/>
<dbReference type="DisGeNET" id="10678"/>
<dbReference type="GeneCards" id="B3GNT2"/>
<dbReference type="HGNC" id="HGNC:15629">
    <property type="gene designation" value="B3GNT2"/>
</dbReference>
<dbReference type="HPA" id="ENSG00000170340">
    <property type="expression patterns" value="Low tissue specificity"/>
</dbReference>
<dbReference type="MalaCards" id="B3GNT2"/>
<dbReference type="MIM" id="605581">
    <property type="type" value="gene"/>
</dbReference>
<dbReference type="neXtProt" id="NX_Q9NY97"/>
<dbReference type="OpenTargets" id="ENSG00000170340"/>
<dbReference type="PharmGKB" id="PA25218"/>
<dbReference type="VEuPathDB" id="HostDB:ENSG00000170340"/>
<dbReference type="eggNOG" id="KOG2287">
    <property type="taxonomic scope" value="Eukaryota"/>
</dbReference>
<dbReference type="GeneTree" id="ENSGT00940000155345"/>
<dbReference type="HOGENOM" id="CLU_036849_5_0_1"/>
<dbReference type="InParanoid" id="Q9NY97"/>
<dbReference type="OMA" id="VSHLNYC"/>
<dbReference type="OrthoDB" id="2139606at2759"/>
<dbReference type="PAN-GO" id="Q9NY97">
    <property type="GO annotations" value="3 GO annotations based on evolutionary models"/>
</dbReference>
<dbReference type="PhylomeDB" id="Q9NY97"/>
<dbReference type="TreeFam" id="TF318639"/>
<dbReference type="BioCyc" id="MetaCyc:ENSG00000170340-MONOMER"/>
<dbReference type="PathwayCommons" id="Q9NY97"/>
<dbReference type="Reactome" id="R-HSA-2022854">
    <property type="pathway name" value="Keratan sulfate biosynthesis"/>
</dbReference>
<dbReference type="Reactome" id="R-HSA-913709">
    <property type="pathway name" value="O-linked glycosylation of mucins"/>
</dbReference>
<dbReference type="SignaLink" id="Q9NY97"/>
<dbReference type="UniPathway" id="UPA00378"/>
<dbReference type="BioGRID-ORCS" id="10678">
    <property type="hits" value="40 hits in 1157 CRISPR screens"/>
</dbReference>
<dbReference type="ChiTaRS" id="B3GNT2">
    <property type="organism name" value="human"/>
</dbReference>
<dbReference type="GeneWiki" id="B3GNT2"/>
<dbReference type="GenomeRNAi" id="10678"/>
<dbReference type="Pharos" id="Q9NY97">
    <property type="development level" value="Tbio"/>
</dbReference>
<dbReference type="PRO" id="PR:Q9NY97"/>
<dbReference type="Proteomes" id="UP000005640">
    <property type="component" value="Chromosome 2"/>
</dbReference>
<dbReference type="RNAct" id="Q9NY97">
    <property type="molecule type" value="protein"/>
</dbReference>
<dbReference type="Bgee" id="ENSG00000170340">
    <property type="expression patterns" value="Expressed in secondary oocyte and 191 other cell types or tissues"/>
</dbReference>
<dbReference type="GO" id="GO:0000139">
    <property type="term" value="C:Golgi membrane"/>
    <property type="evidence" value="ECO:0000318"/>
    <property type="project" value="GO_Central"/>
</dbReference>
<dbReference type="GO" id="GO:0008499">
    <property type="term" value="F:N-acetyl-beta-D-glucosaminide beta-(1,3)-galactosyltransferase activity"/>
    <property type="evidence" value="ECO:0000304"/>
    <property type="project" value="Reactome"/>
</dbReference>
<dbReference type="GO" id="GO:0008532">
    <property type="term" value="F:N-acetyllactosaminide beta-1,3-N-acetylglucosaminyltransferase activity"/>
    <property type="evidence" value="ECO:0000314"/>
    <property type="project" value="UniProtKB"/>
</dbReference>
<dbReference type="GO" id="GO:0007411">
    <property type="term" value="P:axon guidance"/>
    <property type="evidence" value="ECO:0007669"/>
    <property type="project" value="Ensembl"/>
</dbReference>
<dbReference type="GO" id="GO:1990830">
    <property type="term" value="P:cellular response to leukemia inhibitory factor"/>
    <property type="evidence" value="ECO:0007669"/>
    <property type="project" value="Ensembl"/>
</dbReference>
<dbReference type="GO" id="GO:0018146">
    <property type="term" value="P:keratan sulfate proteoglycan biosynthetic process"/>
    <property type="evidence" value="ECO:0000304"/>
    <property type="project" value="Reactome"/>
</dbReference>
<dbReference type="GO" id="GO:0016266">
    <property type="term" value="P:O-glycan processing"/>
    <property type="evidence" value="ECO:0000304"/>
    <property type="project" value="Reactome"/>
</dbReference>
<dbReference type="GO" id="GO:0030311">
    <property type="term" value="P:poly-N-acetyllactosamine biosynthetic process"/>
    <property type="evidence" value="ECO:0000314"/>
    <property type="project" value="UniProtKB"/>
</dbReference>
<dbReference type="GO" id="GO:0006493">
    <property type="term" value="P:protein O-linked glycosylation"/>
    <property type="evidence" value="ECO:0000318"/>
    <property type="project" value="GO_Central"/>
</dbReference>
<dbReference type="GO" id="GO:0007608">
    <property type="term" value="P:sensory perception of smell"/>
    <property type="evidence" value="ECO:0007669"/>
    <property type="project" value="Ensembl"/>
</dbReference>
<dbReference type="FunFam" id="3.90.550.50:FF:000010">
    <property type="entry name" value="Hexosyltransferase"/>
    <property type="match status" value="1"/>
</dbReference>
<dbReference type="Gene3D" id="3.90.550.50">
    <property type="match status" value="1"/>
</dbReference>
<dbReference type="InterPro" id="IPR002659">
    <property type="entry name" value="Glyco_trans_31"/>
</dbReference>
<dbReference type="PANTHER" id="PTHR11214">
    <property type="entry name" value="BETA-1,3-N-ACETYLGLUCOSAMINYLTRANSFERASE"/>
    <property type="match status" value="1"/>
</dbReference>
<dbReference type="PANTHER" id="PTHR11214:SF25">
    <property type="entry name" value="N-ACETYLLACTOSAMINIDE BETA-1,3-N-ACETYLGLUCOSAMINYLTRANSFERASE 2"/>
    <property type="match status" value="1"/>
</dbReference>
<dbReference type="Pfam" id="PF01762">
    <property type="entry name" value="Galactosyl_T"/>
    <property type="match status" value="1"/>
</dbReference>
<sequence>MSVGRRRIKLLGILMMANVFIYFIMEVSKSSSQEKNGKGEVIIPKEKFWKISTPPEAYWNREQEKLNRQYNPILSMLTNQTGEAGRLSNISHLNYCEPDLRVTSVVTGFNNLPDRFKDFLLYLRCRNYSLLIDQPDKCAKKPFLLLAIKSLTPHFARRQAIRESWGQESNAGNQTVVRVFLLGQTPPEDNHPDLSDMLKFESEKHQDILMWNYRDTFFNLSLKEVLFLRWVSTSCPDTEFVFKGDDDVFVNTHHILNYLNSLSKTKAKDLFIGDVIHNAGPHRDKKLKYYIPEVVYSGLYPPYAGGGGFLYSGHLALRLYHITDQVHLYPIDDVYTGMCLQKLGLVPEKHKGFRTFDIEEKNKNNICSYVDLMLVHSRKPQEMIDIWSQLQSAHLKC</sequence>
<name>B3GN2_HUMAN</name>
<comment type="function">
    <text evidence="2 5 6">Beta-1,3-N-acetylglucosaminyltransferase involved in the synthesis of poly-N-acetyllactosamine. Catalyzes the initiation and elongation of poly-N-acetyllactosamine chains. Shows a marked preference for Gal(beta1-4)Glc(NAc)-based acceptors (PubMed:9892646). Probably constitutes the main polylactosamine synthase.</text>
</comment>
<comment type="catalytic activity">
    <reaction evidence="2 5 6">
        <text>a beta-D-galactosyl-(1-&gt;4)-N-acetyl-beta-D-glucosaminyl derivative + UDP-N-acetyl-alpha-D-glucosamine = an N-acetyl-beta-D-glucosaminyl-(1-&gt;3)-beta-D-galactosyl-(1-&gt;4)-N-acetyl-beta-D-glucosaminyl derivative + UDP + H(+)</text>
        <dbReference type="Rhea" id="RHEA:14389"/>
        <dbReference type="ChEBI" id="CHEBI:15378"/>
        <dbReference type="ChEBI" id="CHEBI:57705"/>
        <dbReference type="ChEBI" id="CHEBI:58223"/>
        <dbReference type="ChEBI" id="CHEBI:133507"/>
        <dbReference type="ChEBI" id="CHEBI:134090"/>
        <dbReference type="EC" id="2.4.1.149"/>
    </reaction>
</comment>
<comment type="cofactor">
    <cofactor evidence="6">
        <name>Mn(2+)</name>
        <dbReference type="ChEBI" id="CHEBI:29035"/>
    </cofactor>
</comment>
<comment type="pathway">
    <text evidence="5">Protein modification; protein glycosylation.</text>
</comment>
<comment type="subunit">
    <text evidence="4">Interacts with B3GNT8; this interaction greatly increases B3GNT2 catalytic activity, independently of B3GNT8 enzymatic activity.</text>
</comment>
<comment type="interaction">
    <interactant intactId="EBI-3922389">
        <id>Q9NY97</id>
    </interactant>
    <interactant intactId="EBI-20593091">
        <id>Q7Z7M8</id>
        <label>B3GNT8</label>
    </interactant>
    <organismsDiffer>false</organismsDiffer>
    <experiments>3</experiments>
</comment>
<comment type="subcellular location">
    <subcellularLocation>
        <location evidence="8">Golgi apparatus membrane</location>
        <topology evidence="8">Single-pass type II membrane protein</topology>
    </subcellularLocation>
</comment>
<comment type="alternative products">
    <event type="alternative splicing"/>
    <isoform>
        <id>Q9NY97-1</id>
        <name>1</name>
        <sequence type="displayed"/>
    </isoform>
    <isoform>
        <id>Q9NY97-2</id>
        <name>2</name>
        <sequence type="described" ref="VSP_001791"/>
    </isoform>
</comment>
<comment type="tissue specificity">
    <text evidence="2">Ubiquitous.</text>
</comment>
<comment type="miscellaneous">
    <molecule>Isoform 2</molecule>
    <text evidence="8">May be produced at very low levels due to a premature stop codon in the mRNA, leading to nonsense-mediated mRNA decay.</text>
</comment>
<comment type="similarity">
    <text evidence="8">Belongs to the glycosyltransferase 31 family.</text>
</comment>
<comment type="caution">
    <text evidence="8">Was indicated as B3Gal-T6 in submitted DNA entries.</text>
</comment>
<comment type="sequence caution" evidence="8">
    <conflict type="erroneous initiation">
        <sequence resource="EMBL-CDS" id="BAA92031"/>
    </conflict>
</comment>
<comment type="online information" name="Functional Glycomics Gateway - GTase">
    <link uri="http://www.functionalglycomics.org/glycomics/molecule/jsp/glycoEnzyme/viewGlycoEnzyme.jsp?gbpId=gt_hum_434"/>
    <text>UDP-GlcNAc:betaGal beta-1,3-N-acetylglucosaminyltransferase 1</text>
</comment>
<keyword id="KW-0002">3D-structure</keyword>
<keyword id="KW-0025">Alternative splicing</keyword>
<keyword id="KW-0325">Glycoprotein</keyword>
<keyword id="KW-0328">Glycosyltransferase</keyword>
<keyword id="KW-0333">Golgi apparatus</keyword>
<keyword id="KW-0464">Manganese</keyword>
<keyword id="KW-0472">Membrane</keyword>
<keyword id="KW-1267">Proteomics identification</keyword>
<keyword id="KW-1185">Reference proteome</keyword>
<keyword id="KW-0735">Signal-anchor</keyword>
<keyword id="KW-0808">Transferase</keyword>
<keyword id="KW-0812">Transmembrane</keyword>
<keyword id="KW-1133">Transmembrane helix</keyword>
<proteinExistence type="evidence at protein level"/>